<dbReference type="EC" id="4.1.1.31" evidence="1"/>
<dbReference type="EMBL" id="AM286690">
    <property type="protein sequence ID" value="CAL16128.1"/>
    <property type="molecule type" value="Genomic_DNA"/>
</dbReference>
<dbReference type="RefSeq" id="WP_011587965.1">
    <property type="nucleotide sequence ID" value="NC_008260.1"/>
</dbReference>
<dbReference type="SMR" id="Q0VRS0"/>
<dbReference type="STRING" id="393595.ABO_0680"/>
<dbReference type="KEGG" id="abo:ABO_0680"/>
<dbReference type="eggNOG" id="COG2352">
    <property type="taxonomic scope" value="Bacteria"/>
</dbReference>
<dbReference type="HOGENOM" id="CLU_006557_2_0_6"/>
<dbReference type="OrthoDB" id="9768133at2"/>
<dbReference type="Proteomes" id="UP000008871">
    <property type="component" value="Chromosome"/>
</dbReference>
<dbReference type="GO" id="GO:0005829">
    <property type="term" value="C:cytosol"/>
    <property type="evidence" value="ECO:0007669"/>
    <property type="project" value="TreeGrafter"/>
</dbReference>
<dbReference type="GO" id="GO:0000287">
    <property type="term" value="F:magnesium ion binding"/>
    <property type="evidence" value="ECO:0007669"/>
    <property type="project" value="UniProtKB-UniRule"/>
</dbReference>
<dbReference type="GO" id="GO:0008964">
    <property type="term" value="F:phosphoenolpyruvate carboxylase activity"/>
    <property type="evidence" value="ECO:0007669"/>
    <property type="project" value="UniProtKB-UniRule"/>
</dbReference>
<dbReference type="GO" id="GO:0015977">
    <property type="term" value="P:carbon fixation"/>
    <property type="evidence" value="ECO:0007669"/>
    <property type="project" value="UniProtKB-UniRule"/>
</dbReference>
<dbReference type="GO" id="GO:0006107">
    <property type="term" value="P:oxaloacetate metabolic process"/>
    <property type="evidence" value="ECO:0007669"/>
    <property type="project" value="UniProtKB-UniRule"/>
</dbReference>
<dbReference type="GO" id="GO:0006099">
    <property type="term" value="P:tricarboxylic acid cycle"/>
    <property type="evidence" value="ECO:0007669"/>
    <property type="project" value="InterPro"/>
</dbReference>
<dbReference type="Gene3D" id="1.20.1440.90">
    <property type="entry name" value="Phosphoenolpyruvate/pyruvate domain"/>
    <property type="match status" value="1"/>
</dbReference>
<dbReference type="HAMAP" id="MF_00595">
    <property type="entry name" value="PEPcase_type1"/>
    <property type="match status" value="1"/>
</dbReference>
<dbReference type="InterPro" id="IPR021135">
    <property type="entry name" value="PEP_COase"/>
</dbReference>
<dbReference type="InterPro" id="IPR022805">
    <property type="entry name" value="PEP_COase_bac/pln-type"/>
</dbReference>
<dbReference type="InterPro" id="IPR018129">
    <property type="entry name" value="PEP_COase_Lys_AS"/>
</dbReference>
<dbReference type="InterPro" id="IPR033129">
    <property type="entry name" value="PEPCASE_His_AS"/>
</dbReference>
<dbReference type="InterPro" id="IPR015813">
    <property type="entry name" value="Pyrv/PenolPyrv_kinase-like_dom"/>
</dbReference>
<dbReference type="NCBIfam" id="NF000584">
    <property type="entry name" value="PRK00009.1"/>
    <property type="match status" value="1"/>
</dbReference>
<dbReference type="PANTHER" id="PTHR30523">
    <property type="entry name" value="PHOSPHOENOLPYRUVATE CARBOXYLASE"/>
    <property type="match status" value="1"/>
</dbReference>
<dbReference type="PANTHER" id="PTHR30523:SF6">
    <property type="entry name" value="PHOSPHOENOLPYRUVATE CARBOXYLASE"/>
    <property type="match status" value="1"/>
</dbReference>
<dbReference type="Pfam" id="PF00311">
    <property type="entry name" value="PEPcase"/>
    <property type="match status" value="1"/>
</dbReference>
<dbReference type="PRINTS" id="PR00150">
    <property type="entry name" value="PEPCARBXLASE"/>
</dbReference>
<dbReference type="SUPFAM" id="SSF51621">
    <property type="entry name" value="Phosphoenolpyruvate/pyruvate domain"/>
    <property type="match status" value="1"/>
</dbReference>
<dbReference type="PROSITE" id="PS00781">
    <property type="entry name" value="PEPCASE_1"/>
    <property type="match status" value="1"/>
</dbReference>
<dbReference type="PROSITE" id="PS00393">
    <property type="entry name" value="PEPCASE_2"/>
    <property type="match status" value="1"/>
</dbReference>
<organism>
    <name type="scientific">Alcanivorax borkumensis (strain ATCC 700651 / DSM 11573 / NCIMB 13689 / SK2)</name>
    <dbReference type="NCBI Taxonomy" id="393595"/>
    <lineage>
        <taxon>Bacteria</taxon>
        <taxon>Pseudomonadati</taxon>
        <taxon>Pseudomonadota</taxon>
        <taxon>Gammaproteobacteria</taxon>
        <taxon>Oceanospirillales</taxon>
        <taxon>Alcanivoracaceae</taxon>
        <taxon>Alcanivorax</taxon>
    </lineage>
</organism>
<proteinExistence type="inferred from homology"/>
<feature type="chain" id="PRO_1000025546" description="Phosphoenolpyruvate carboxylase">
    <location>
        <begin position="1"/>
        <end position="888"/>
    </location>
</feature>
<feature type="active site" evidence="1">
    <location>
        <position position="144"/>
    </location>
</feature>
<feature type="active site" evidence="1">
    <location>
        <position position="553"/>
    </location>
</feature>
<name>CAPP_ALCBS</name>
<gene>
    <name evidence="1" type="primary">ppc</name>
    <name type="ordered locus">ABO_0680</name>
</gene>
<comment type="function">
    <text evidence="1">Forms oxaloacetate, a four-carbon dicarboxylic acid source for the tricarboxylic acid cycle.</text>
</comment>
<comment type="catalytic activity">
    <reaction evidence="1">
        <text>oxaloacetate + phosphate = phosphoenolpyruvate + hydrogencarbonate</text>
        <dbReference type="Rhea" id="RHEA:28370"/>
        <dbReference type="ChEBI" id="CHEBI:16452"/>
        <dbReference type="ChEBI" id="CHEBI:17544"/>
        <dbReference type="ChEBI" id="CHEBI:43474"/>
        <dbReference type="ChEBI" id="CHEBI:58702"/>
        <dbReference type="EC" id="4.1.1.31"/>
    </reaction>
</comment>
<comment type="cofactor">
    <cofactor evidence="1">
        <name>Mg(2+)</name>
        <dbReference type="ChEBI" id="CHEBI:18420"/>
    </cofactor>
</comment>
<comment type="similarity">
    <text evidence="1">Belongs to the PEPCase type 1 family.</text>
</comment>
<keyword id="KW-0120">Carbon dioxide fixation</keyword>
<keyword id="KW-0456">Lyase</keyword>
<keyword id="KW-0460">Magnesium</keyword>
<keyword id="KW-1185">Reference proteome</keyword>
<sequence>MDHNVNAPLRDDVRLLGDLLGECLRQQAGDSIYETVEKIRQASVATRTEGGASLASLRDLLSPLDDATLLEVARAFSQFLNLSNIAEQHHRERLHRQHQRYPGDAGTDQGLQEVLQRLADNDIAKEQISGTLEQLSVELVLTAHPTEVTRRTLIRKYDQMADLLSELDRPDFNEDERELRRERLRRVILAAWCTDEIRREKPTPVDEAKWGFATIEQSLWQAVPDVLRQLEAQLADRGLPAPPSDWAPVKLASWMGGDRDGNPNVTAPVTREVLLLARWMAADLYLRDVENLLADLSMKSASEELLAATGPTHEPYRVLLREVRSRLRLTRRQMEAQVEGLPVPEGQAYLRREELMAPLQLLDRSLRAVGLSDIADGDLKNTLRRLNCFGITLLRLDIRQESTRHSDVLDAITRYLQLGRYSDWDEAARQAFLVDELQARRPLIDAAFRDSEHCTAEVAEVLATCEVIAEQGSEGLGAYVISMATTPSDVMAVMLLQKIAGVREPMRVVPLFETLDDLDGAEQTMSALLALPFYRERVAAGQEIMIGYSDSAKDAGFLGAAWAQYRAQEKLTALFADNGIPLTLFHGRGGSISRGGSPTRMALLSQPPGSVAGRIRVTEQGEVIRFKYGRPSVAVFNLEQYVAATLEATLLPPQAARPEWRQQMQALTDTSVAGYRGVVRDEPELVRYLRTVTPETELSRLALGSRPARRKSDQGISSLRAIPWVFAWTQIRLMLPAWLGTGAALEDAQNDAAQHAMVREMASEWPFFQGVVDMLEMVLAKSDLRVAAWYEERLAGDDPGLMRLGEVLRERLTATVSALSALTGREDLLDNNPVMRWSIRVRDPYTDPLHLLQAELMARLRQQDGDETLESALMVTIAGIAAGLRNTG</sequence>
<reference key="1">
    <citation type="journal article" date="2006" name="Nat. Biotechnol.">
        <title>Genome sequence of the ubiquitous hydrocarbon-degrading marine bacterium Alcanivorax borkumensis.</title>
        <authorList>
            <person name="Schneiker S."/>
            <person name="Martins dos Santos V.A.P."/>
            <person name="Bartels D."/>
            <person name="Bekel T."/>
            <person name="Brecht M."/>
            <person name="Buhrmester J."/>
            <person name="Chernikova T.N."/>
            <person name="Denaro R."/>
            <person name="Ferrer M."/>
            <person name="Gertler C."/>
            <person name="Goesmann A."/>
            <person name="Golyshina O.V."/>
            <person name="Kaminski F."/>
            <person name="Khachane A.N."/>
            <person name="Lang S."/>
            <person name="Linke B."/>
            <person name="McHardy A.C."/>
            <person name="Meyer F."/>
            <person name="Nechitaylo T."/>
            <person name="Puehler A."/>
            <person name="Regenhardt D."/>
            <person name="Rupp O."/>
            <person name="Sabirova J.S."/>
            <person name="Selbitschka W."/>
            <person name="Yakimov M.M."/>
            <person name="Timmis K.N."/>
            <person name="Vorhoelter F.-J."/>
            <person name="Weidner S."/>
            <person name="Kaiser O."/>
            <person name="Golyshin P.N."/>
        </authorList>
    </citation>
    <scope>NUCLEOTIDE SEQUENCE [LARGE SCALE GENOMIC DNA]</scope>
    <source>
        <strain>ATCC 700651 / DSM 11573 / NCIMB 13689 / SK2</strain>
    </source>
</reference>
<accession>Q0VRS0</accession>
<evidence type="ECO:0000255" key="1">
    <source>
        <dbReference type="HAMAP-Rule" id="MF_00595"/>
    </source>
</evidence>
<protein>
    <recommendedName>
        <fullName evidence="1">Phosphoenolpyruvate carboxylase</fullName>
        <shortName evidence="1">PEPC</shortName>
        <shortName evidence="1">PEPCase</shortName>
        <ecNumber evidence="1">4.1.1.31</ecNumber>
    </recommendedName>
</protein>